<comment type="subcellular location">
    <subcellularLocation>
        <location evidence="4">Secreted</location>
    </subcellularLocation>
</comment>
<comment type="tissue specificity">
    <text evidence="4">Expressed by the venom duct.</text>
</comment>
<comment type="domain">
    <text evidence="3">The cysteine framework is V (CC-CC).</text>
</comment>
<comment type="PTM">
    <text evidence="3">Contains 2 disulfide bonds that can be either 'C1-C3, C2-C4' or 'C1-C4, C2-C3', since these disulfide connectivities have been observed for conotoxins with cysteine framework V (for examples, see AC P0DQQ7 and AC P81755).</text>
</comment>
<comment type="similarity">
    <text evidence="3">Belongs to the conotoxin T superfamily.</text>
</comment>
<protein>
    <recommendedName>
        <fullName evidence="3">Conotoxin Vn5.3</fullName>
    </recommendedName>
    <alternativeName>
        <fullName evidence="5">Conotoxin VnMRCL-022</fullName>
    </alternativeName>
</protein>
<dbReference type="EMBL" id="AF214968">
    <property type="protein sequence ID" value="AAG60396.1"/>
    <property type="molecule type" value="mRNA"/>
</dbReference>
<dbReference type="ConoServer" id="655">
    <property type="toxin name" value="Vn5.3 precursor"/>
</dbReference>
<dbReference type="GO" id="GO:0005576">
    <property type="term" value="C:extracellular region"/>
    <property type="evidence" value="ECO:0007669"/>
    <property type="project" value="UniProtKB-SubCell"/>
</dbReference>
<dbReference type="GO" id="GO:0090729">
    <property type="term" value="F:toxin activity"/>
    <property type="evidence" value="ECO:0007669"/>
    <property type="project" value="UniProtKB-KW"/>
</dbReference>
<dbReference type="InterPro" id="IPR031565">
    <property type="entry name" value="T-conotoxin"/>
</dbReference>
<dbReference type="Pfam" id="PF16981">
    <property type="entry name" value="Chi-conotoxin"/>
    <property type="match status" value="1"/>
</dbReference>
<feature type="signal peptide" evidence="2">
    <location>
        <begin position="1"/>
        <end position="19"/>
    </location>
</feature>
<feature type="propeptide" id="PRO_0000404975" evidence="1">
    <location>
        <begin position="20"/>
        <end position="50"/>
    </location>
</feature>
<feature type="peptide" id="PRO_0000404976" description="Conotoxin Vn5.3">
    <location>
        <begin position="51"/>
        <end position="60"/>
    </location>
</feature>
<evidence type="ECO:0000250" key="1"/>
<evidence type="ECO:0000255" key="2"/>
<evidence type="ECO:0000305" key="3"/>
<evidence type="ECO:0000305" key="4">
    <source>
    </source>
</evidence>
<evidence type="ECO:0000312" key="5">
    <source>
        <dbReference type="EMBL" id="AAG60396.1"/>
    </source>
</evidence>
<reference key="1">
    <citation type="journal article" date="2001" name="Mol. Biol. Evol.">
        <title>Mechanisms for evolving hypervariability: the case of conopeptides.</title>
        <authorList>
            <person name="Conticello S.G."/>
            <person name="Gilad Y."/>
            <person name="Avidan N."/>
            <person name="Ben-Asher E."/>
            <person name="Levy Z."/>
            <person name="Fainzilber M."/>
        </authorList>
    </citation>
    <scope>NUCLEOTIDE SEQUENCE [MRNA]</scope>
    <source>
        <tissue>Venom duct</tissue>
    </source>
</reference>
<keyword id="KW-1015">Disulfide bond</keyword>
<keyword id="KW-0528">Neurotoxin</keyword>
<keyword id="KW-0964">Secreted</keyword>
<keyword id="KW-0732">Signal</keyword>
<keyword id="KW-0800">Toxin</keyword>
<name>CT53B_CONVE</name>
<accession>Q9BPG1</accession>
<proteinExistence type="inferred from homology"/>
<organism>
    <name type="scientific">Conus ventricosus</name>
    <name type="common">Mediterranean cone</name>
    <dbReference type="NCBI Taxonomy" id="117992"/>
    <lineage>
        <taxon>Eukaryota</taxon>
        <taxon>Metazoa</taxon>
        <taxon>Spiralia</taxon>
        <taxon>Lophotrochozoa</taxon>
        <taxon>Mollusca</taxon>
        <taxon>Gastropoda</taxon>
        <taxon>Caenogastropoda</taxon>
        <taxon>Neogastropoda</taxon>
        <taxon>Conoidea</taxon>
        <taxon>Conidae</taxon>
        <taxon>Conus</taxon>
        <taxon>Lautoconus</taxon>
    </lineage>
</organism>
<sequence length="61" mass="6877">MHCLPVFVILLLLIASAPGVDVQPKTKNFMTRASLRDFAKKTPKRLSKLRGCCPRSFLCCR</sequence>